<gene>
    <name evidence="1" type="primary">ctaB</name>
    <name type="ordered locus">lmo2057</name>
</gene>
<dbReference type="EC" id="2.5.1.141" evidence="1"/>
<dbReference type="EMBL" id="AL591982">
    <property type="protein sequence ID" value="CAD00135.1"/>
    <property type="molecule type" value="Genomic_DNA"/>
</dbReference>
<dbReference type="PIR" id="AI1331">
    <property type="entry name" value="AI1331"/>
</dbReference>
<dbReference type="RefSeq" id="NP_465581.1">
    <property type="nucleotide sequence ID" value="NC_003210.1"/>
</dbReference>
<dbReference type="SMR" id="Q8Y5K3"/>
<dbReference type="STRING" id="169963.gene:17594742"/>
<dbReference type="PaxDb" id="169963-lmo2057"/>
<dbReference type="EnsemblBacteria" id="CAD00135">
    <property type="protein sequence ID" value="CAD00135"/>
    <property type="gene ID" value="CAD00135"/>
</dbReference>
<dbReference type="GeneID" id="984806"/>
<dbReference type="KEGG" id="lmo:lmo2057"/>
<dbReference type="PATRIC" id="fig|169963.11.peg.2105"/>
<dbReference type="eggNOG" id="COG0109">
    <property type="taxonomic scope" value="Bacteria"/>
</dbReference>
<dbReference type="HOGENOM" id="CLU_029631_0_0_9"/>
<dbReference type="OrthoDB" id="9814417at2"/>
<dbReference type="PhylomeDB" id="Q8Y5K3"/>
<dbReference type="BioCyc" id="LMON169963:LMO2057-MONOMER"/>
<dbReference type="UniPathway" id="UPA00834">
    <property type="reaction ID" value="UER00712"/>
</dbReference>
<dbReference type="Proteomes" id="UP000000817">
    <property type="component" value="Chromosome"/>
</dbReference>
<dbReference type="GO" id="GO:0005886">
    <property type="term" value="C:plasma membrane"/>
    <property type="evidence" value="ECO:0000318"/>
    <property type="project" value="GO_Central"/>
</dbReference>
<dbReference type="GO" id="GO:0008495">
    <property type="term" value="F:protoheme IX farnesyltransferase activity"/>
    <property type="evidence" value="ECO:0000318"/>
    <property type="project" value="GO_Central"/>
</dbReference>
<dbReference type="GO" id="GO:0048034">
    <property type="term" value="P:heme O biosynthetic process"/>
    <property type="evidence" value="ECO:0000318"/>
    <property type="project" value="GO_Central"/>
</dbReference>
<dbReference type="CDD" id="cd13957">
    <property type="entry name" value="PT_UbiA_Cox10"/>
    <property type="match status" value="1"/>
</dbReference>
<dbReference type="FunFam" id="1.10.357.140:FF:000001">
    <property type="entry name" value="Protoheme IX farnesyltransferase"/>
    <property type="match status" value="1"/>
</dbReference>
<dbReference type="Gene3D" id="1.10.357.140">
    <property type="entry name" value="UbiA prenyltransferase"/>
    <property type="match status" value="1"/>
</dbReference>
<dbReference type="HAMAP" id="MF_00154">
    <property type="entry name" value="CyoE_CtaB"/>
    <property type="match status" value="1"/>
</dbReference>
<dbReference type="InterPro" id="IPR006369">
    <property type="entry name" value="Protohaem_IX_farnesylTrfase"/>
</dbReference>
<dbReference type="InterPro" id="IPR000537">
    <property type="entry name" value="UbiA_prenyltransferase"/>
</dbReference>
<dbReference type="InterPro" id="IPR030470">
    <property type="entry name" value="UbiA_prenylTrfase_CS"/>
</dbReference>
<dbReference type="InterPro" id="IPR044878">
    <property type="entry name" value="UbiA_sf"/>
</dbReference>
<dbReference type="NCBIfam" id="TIGR01473">
    <property type="entry name" value="cyoE_ctaB"/>
    <property type="match status" value="1"/>
</dbReference>
<dbReference type="PANTHER" id="PTHR43448">
    <property type="entry name" value="PROTOHEME IX FARNESYLTRANSFERASE, MITOCHONDRIAL"/>
    <property type="match status" value="1"/>
</dbReference>
<dbReference type="PANTHER" id="PTHR43448:SF2">
    <property type="entry name" value="PROTOHEME IX FARNESYLTRANSFERASE, MITOCHONDRIAL"/>
    <property type="match status" value="1"/>
</dbReference>
<dbReference type="Pfam" id="PF01040">
    <property type="entry name" value="UbiA"/>
    <property type="match status" value="1"/>
</dbReference>
<dbReference type="PROSITE" id="PS00943">
    <property type="entry name" value="UBIA"/>
    <property type="match status" value="1"/>
</dbReference>
<sequence length="301" mass="33665">MNQIEKTGELSASRFTVRDFTELVKIGIVNSNTITAFTGMWLAFQLNGISFIQNVDVIFFTIVGSALIVAASGAFNNVIDRDIDGIMERTKNRPTMTGKISGKRALMVALVLGVVGTIMLFMTTWQAGVLGVIGVFLYVVVYSLYAKRKLVSNTVIGSFSGAVPPLIGWFAVEPTFSIVPIMLFLVMFCWQPPHFYAIAIKRKEEYAAAGIPMLPVVKGIERTKKSMFFWVILLTILPFFMFDLGIVYVILATLLNIGWLALSIYGFKMEDSIKWAKWMFVYSLNYMTILFVAMVVISIFL</sequence>
<proteinExistence type="inferred from homology"/>
<evidence type="ECO:0000255" key="1">
    <source>
        <dbReference type="HAMAP-Rule" id="MF_00154"/>
    </source>
</evidence>
<comment type="function">
    <text evidence="1">Converts heme B (protoheme IX) to heme O by substitution of the vinyl group on carbon 2 of heme B porphyrin ring with a hydroxyethyl farnesyl side group.</text>
</comment>
<comment type="catalytic activity">
    <reaction evidence="1">
        <text>heme b + (2E,6E)-farnesyl diphosphate + H2O = Fe(II)-heme o + diphosphate</text>
        <dbReference type="Rhea" id="RHEA:28070"/>
        <dbReference type="ChEBI" id="CHEBI:15377"/>
        <dbReference type="ChEBI" id="CHEBI:33019"/>
        <dbReference type="ChEBI" id="CHEBI:60344"/>
        <dbReference type="ChEBI" id="CHEBI:60530"/>
        <dbReference type="ChEBI" id="CHEBI:175763"/>
        <dbReference type="EC" id="2.5.1.141"/>
    </reaction>
</comment>
<comment type="pathway">
    <text evidence="1">Porphyrin-containing compound metabolism; heme O biosynthesis; heme O from protoheme: step 1/1.</text>
</comment>
<comment type="subunit">
    <text evidence="1">Interacts with CtaA.</text>
</comment>
<comment type="subcellular location">
    <subcellularLocation>
        <location evidence="1">Cell membrane</location>
        <topology evidence="1">Multi-pass membrane protein</topology>
    </subcellularLocation>
</comment>
<comment type="miscellaneous">
    <text evidence="1">Carbon 2 of the heme B porphyrin ring is defined according to the Fischer nomenclature.</text>
</comment>
<comment type="similarity">
    <text evidence="1">Belongs to the UbiA prenyltransferase family. Protoheme IX farnesyltransferase subfamily.</text>
</comment>
<feature type="chain" id="PRO_0000327072" description="Protoheme IX farnesyltransferase">
    <location>
        <begin position="1"/>
        <end position="301"/>
    </location>
</feature>
<feature type="transmembrane region" description="Helical" evidence="1">
    <location>
        <begin position="20"/>
        <end position="42"/>
    </location>
</feature>
<feature type="transmembrane region" description="Helical" evidence="1">
    <location>
        <begin position="55"/>
        <end position="75"/>
    </location>
</feature>
<feature type="transmembrane region" description="Helical" evidence="1">
    <location>
        <begin position="105"/>
        <end position="125"/>
    </location>
</feature>
<feature type="transmembrane region" description="Helical" evidence="1">
    <location>
        <begin position="126"/>
        <end position="146"/>
    </location>
</feature>
<feature type="transmembrane region" description="Helical" evidence="1">
    <location>
        <begin position="150"/>
        <end position="172"/>
    </location>
</feature>
<feature type="transmembrane region" description="Helical" evidence="1">
    <location>
        <begin position="176"/>
        <end position="198"/>
    </location>
</feature>
<feature type="transmembrane region" description="Helical" evidence="1">
    <location>
        <begin position="227"/>
        <end position="247"/>
    </location>
</feature>
<feature type="transmembrane region" description="Helical" evidence="1">
    <location>
        <begin position="249"/>
        <end position="269"/>
    </location>
</feature>
<feature type="transmembrane region" description="Helical" evidence="1">
    <location>
        <begin position="280"/>
        <end position="300"/>
    </location>
</feature>
<keyword id="KW-1003">Cell membrane</keyword>
<keyword id="KW-0350">Heme biosynthesis</keyword>
<keyword id="KW-0472">Membrane</keyword>
<keyword id="KW-1185">Reference proteome</keyword>
<keyword id="KW-0808">Transferase</keyword>
<keyword id="KW-0812">Transmembrane</keyword>
<keyword id="KW-1133">Transmembrane helix</keyword>
<reference key="1">
    <citation type="journal article" date="2001" name="Science">
        <title>Comparative genomics of Listeria species.</title>
        <authorList>
            <person name="Glaser P."/>
            <person name="Frangeul L."/>
            <person name="Buchrieser C."/>
            <person name="Rusniok C."/>
            <person name="Amend A."/>
            <person name="Baquero F."/>
            <person name="Berche P."/>
            <person name="Bloecker H."/>
            <person name="Brandt P."/>
            <person name="Chakraborty T."/>
            <person name="Charbit A."/>
            <person name="Chetouani F."/>
            <person name="Couve E."/>
            <person name="de Daruvar A."/>
            <person name="Dehoux P."/>
            <person name="Domann E."/>
            <person name="Dominguez-Bernal G."/>
            <person name="Duchaud E."/>
            <person name="Durant L."/>
            <person name="Dussurget O."/>
            <person name="Entian K.-D."/>
            <person name="Fsihi H."/>
            <person name="Garcia-del Portillo F."/>
            <person name="Garrido P."/>
            <person name="Gautier L."/>
            <person name="Goebel W."/>
            <person name="Gomez-Lopez N."/>
            <person name="Hain T."/>
            <person name="Hauf J."/>
            <person name="Jackson D."/>
            <person name="Jones L.-M."/>
            <person name="Kaerst U."/>
            <person name="Kreft J."/>
            <person name="Kuhn M."/>
            <person name="Kunst F."/>
            <person name="Kurapkat G."/>
            <person name="Madueno E."/>
            <person name="Maitournam A."/>
            <person name="Mata Vicente J."/>
            <person name="Ng E."/>
            <person name="Nedjari H."/>
            <person name="Nordsiek G."/>
            <person name="Novella S."/>
            <person name="de Pablos B."/>
            <person name="Perez-Diaz J.-C."/>
            <person name="Purcell R."/>
            <person name="Remmel B."/>
            <person name="Rose M."/>
            <person name="Schlueter T."/>
            <person name="Simoes N."/>
            <person name="Tierrez A."/>
            <person name="Vazquez-Boland J.-A."/>
            <person name="Voss H."/>
            <person name="Wehland J."/>
            <person name="Cossart P."/>
        </authorList>
    </citation>
    <scope>NUCLEOTIDE SEQUENCE [LARGE SCALE GENOMIC DNA]</scope>
    <source>
        <strain>ATCC BAA-679 / EGD-e</strain>
    </source>
</reference>
<organism>
    <name type="scientific">Listeria monocytogenes serovar 1/2a (strain ATCC BAA-679 / EGD-e)</name>
    <dbReference type="NCBI Taxonomy" id="169963"/>
    <lineage>
        <taxon>Bacteria</taxon>
        <taxon>Bacillati</taxon>
        <taxon>Bacillota</taxon>
        <taxon>Bacilli</taxon>
        <taxon>Bacillales</taxon>
        <taxon>Listeriaceae</taxon>
        <taxon>Listeria</taxon>
    </lineage>
</organism>
<accession>Q8Y5K3</accession>
<name>COXX_LISMO</name>
<protein>
    <recommendedName>
        <fullName evidence="1">Protoheme IX farnesyltransferase</fullName>
        <ecNumber evidence="1">2.5.1.141</ecNumber>
    </recommendedName>
    <alternativeName>
        <fullName evidence="1">Heme B farnesyltransferase</fullName>
    </alternativeName>
    <alternativeName>
        <fullName evidence="1">Heme O synthase</fullName>
    </alternativeName>
</protein>